<accession>Q9QYY9</accession>
<accession>Q3V0P5</accession>
<sequence>MGTQGKVIKCKAAIAWKTGSPLCIEEIEVSPPKACEVRIQVIATCVCPTDINATDPKKKALFPVVLGHECAGIVESVGPGVTNFKPGDKVIPFFAPQCKRCKLCLSPLTNLCGKLRNFKYPTIDQELMEDRTSRFTCKGRSIYHFMGVSSFSQYTVVSEANLARVDDEANLERVCLIGCGFSSGYGAAINTAKVTPSSTCAVFGLGCVGLSAIIGCKIAGASRIIAIDINGEKFPKAKALGATDCLNPRELDKPVQDVITELTAGGVDYSLDCAGTAQTLKAAVDCTVLGWGSCTVVGAKVDKMTIPTVDVILGRSINGTFFGGWKSVDSVPNLVSDYKNKKFDLDLLVTHALPFESINDAIDLMKEGKSIRTILTF</sequence>
<dbReference type="EC" id="1.1.1.105" evidence="6"/>
<dbReference type="EMBL" id="AJ245750">
    <property type="protein sequence ID" value="CAB57455.1"/>
    <property type="molecule type" value="mRNA"/>
</dbReference>
<dbReference type="EMBL" id="AK132994">
    <property type="protein sequence ID" value="BAE21459.1"/>
    <property type="molecule type" value="mRNA"/>
</dbReference>
<dbReference type="CCDS" id="CCDS38653.1"/>
<dbReference type="RefSeq" id="NP_036126.2">
    <property type="nucleotide sequence ID" value="NM_011996.2"/>
</dbReference>
<dbReference type="PDB" id="1E3E">
    <property type="method" value="X-ray"/>
    <property type="resolution" value="2.12 A"/>
    <property type="chains" value="A/B=2-377"/>
</dbReference>
<dbReference type="PDB" id="1E3I">
    <property type="method" value="X-ray"/>
    <property type="resolution" value="2.08 A"/>
    <property type="chains" value="A/B=2-377"/>
</dbReference>
<dbReference type="PDB" id="1E3L">
    <property type="method" value="X-ray"/>
    <property type="resolution" value="2.50 A"/>
    <property type="chains" value="A/B=2-377"/>
</dbReference>
<dbReference type="PDBsum" id="1E3E"/>
<dbReference type="PDBsum" id="1E3I"/>
<dbReference type="PDBsum" id="1E3L"/>
<dbReference type="SMR" id="Q9QYY9"/>
<dbReference type="BioGRID" id="205034">
    <property type="interactions" value="1"/>
</dbReference>
<dbReference type="FunCoup" id="Q9QYY9">
    <property type="interactions" value="308"/>
</dbReference>
<dbReference type="STRING" id="10090.ENSMUSP00000013458"/>
<dbReference type="SwissLipids" id="SLP:000000496"/>
<dbReference type="iPTMnet" id="Q9QYY9"/>
<dbReference type="PhosphoSitePlus" id="Q9QYY9"/>
<dbReference type="SwissPalm" id="Q9QYY9"/>
<dbReference type="jPOST" id="Q9QYY9"/>
<dbReference type="PaxDb" id="10090-ENSMUSP00000013458"/>
<dbReference type="ProteomicsDB" id="285618"/>
<dbReference type="Antibodypedia" id="14813">
    <property type="antibodies" value="277 antibodies from 30 providers"/>
</dbReference>
<dbReference type="DNASU" id="26876"/>
<dbReference type="Ensembl" id="ENSMUST00000013458.9">
    <property type="protein sequence ID" value="ENSMUSP00000013458.9"/>
    <property type="gene ID" value="ENSMUSG00000037797.15"/>
</dbReference>
<dbReference type="GeneID" id="26876"/>
<dbReference type="KEGG" id="mmu:26876"/>
<dbReference type="UCSC" id="uc008rnj.1">
    <property type="organism name" value="mouse"/>
</dbReference>
<dbReference type="AGR" id="MGI:1349472"/>
<dbReference type="CTD" id="127"/>
<dbReference type="MGI" id="MGI:1349472">
    <property type="gene designation" value="Adh4"/>
</dbReference>
<dbReference type="VEuPathDB" id="HostDB:ENSMUSG00000037797"/>
<dbReference type="eggNOG" id="KOG0022">
    <property type="taxonomic scope" value="Eukaryota"/>
</dbReference>
<dbReference type="GeneTree" id="ENSGT00940000162645"/>
<dbReference type="HOGENOM" id="CLU_026673_14_0_1"/>
<dbReference type="InParanoid" id="Q9QYY9"/>
<dbReference type="OMA" id="HISGCGV"/>
<dbReference type="OrthoDB" id="417550at2759"/>
<dbReference type="PhylomeDB" id="Q9QYY9"/>
<dbReference type="TreeFam" id="TF300429"/>
<dbReference type="BRENDA" id="1.1.1.1">
    <property type="organism ID" value="3474"/>
</dbReference>
<dbReference type="Reactome" id="R-MMU-5365859">
    <property type="pathway name" value="RA biosynthesis pathway"/>
</dbReference>
<dbReference type="Reactome" id="R-MMU-71384">
    <property type="pathway name" value="Ethanol oxidation"/>
</dbReference>
<dbReference type="SABIO-RK" id="Q9QYY9"/>
<dbReference type="BioGRID-ORCS" id="26876">
    <property type="hits" value="3 hits in 78 CRISPR screens"/>
</dbReference>
<dbReference type="EvolutionaryTrace" id="Q9QYY9"/>
<dbReference type="PRO" id="PR:Q9QYY9"/>
<dbReference type="Proteomes" id="UP000000589">
    <property type="component" value="Chromosome 3"/>
</dbReference>
<dbReference type="RNAct" id="Q9QYY9">
    <property type="molecule type" value="protein"/>
</dbReference>
<dbReference type="Bgee" id="ENSMUSG00000037797">
    <property type="expression patterns" value="Expressed in left lobe of liver and 49 other cell types or tissues"/>
</dbReference>
<dbReference type="ExpressionAtlas" id="Q9QYY9">
    <property type="expression patterns" value="baseline and differential"/>
</dbReference>
<dbReference type="GO" id="GO:0005829">
    <property type="term" value="C:cytosol"/>
    <property type="evidence" value="ECO:0007669"/>
    <property type="project" value="Ensembl"/>
</dbReference>
<dbReference type="GO" id="GO:0005654">
    <property type="term" value="C:nucleoplasm"/>
    <property type="evidence" value="ECO:0007669"/>
    <property type="project" value="Ensembl"/>
</dbReference>
<dbReference type="GO" id="GO:0004022">
    <property type="term" value="F:alcohol dehydrogenase (NAD+) activity"/>
    <property type="evidence" value="ECO:0000314"/>
    <property type="project" value="MGI"/>
</dbReference>
<dbReference type="GO" id="GO:0004032">
    <property type="term" value="F:aldose reductase (NADPH) activity"/>
    <property type="evidence" value="ECO:0000314"/>
    <property type="project" value="MGI"/>
</dbReference>
<dbReference type="GO" id="GO:0005503">
    <property type="term" value="F:all-trans retinal binding"/>
    <property type="evidence" value="ECO:0007669"/>
    <property type="project" value="Ensembl"/>
</dbReference>
<dbReference type="GO" id="GO:0004745">
    <property type="term" value="F:all-trans-retinol dehydrogenase (NAD+) activity"/>
    <property type="evidence" value="ECO:0000250"/>
    <property type="project" value="UniProtKB"/>
</dbReference>
<dbReference type="GO" id="GO:0018479">
    <property type="term" value="F:benzaldehyde dehydrogenase (NAD+) activity"/>
    <property type="evidence" value="ECO:0007669"/>
    <property type="project" value="Ensembl"/>
</dbReference>
<dbReference type="GO" id="GO:0051287">
    <property type="term" value="F:NAD binding"/>
    <property type="evidence" value="ECO:0007669"/>
    <property type="project" value="Ensembl"/>
</dbReference>
<dbReference type="GO" id="GO:0003960">
    <property type="term" value="F:NADPH:quinone reductase activity"/>
    <property type="evidence" value="ECO:0000314"/>
    <property type="project" value="MGI"/>
</dbReference>
<dbReference type="GO" id="GO:0019841">
    <property type="term" value="F:retinol binding"/>
    <property type="evidence" value="ECO:0007669"/>
    <property type="project" value="Ensembl"/>
</dbReference>
<dbReference type="GO" id="GO:0008270">
    <property type="term" value="F:zinc ion binding"/>
    <property type="evidence" value="ECO:0007669"/>
    <property type="project" value="Ensembl"/>
</dbReference>
<dbReference type="GO" id="GO:0046164">
    <property type="term" value="P:alcohol catabolic process"/>
    <property type="evidence" value="ECO:0000314"/>
    <property type="project" value="MGI"/>
</dbReference>
<dbReference type="GO" id="GO:0006081">
    <property type="term" value="P:aldehyde metabolic process"/>
    <property type="evidence" value="ECO:0000314"/>
    <property type="project" value="MGI"/>
</dbReference>
<dbReference type="GO" id="GO:0006067">
    <property type="term" value="P:ethanol metabolic process"/>
    <property type="evidence" value="ECO:0000314"/>
    <property type="project" value="MGI"/>
</dbReference>
<dbReference type="GO" id="GO:0010430">
    <property type="term" value="P:fatty acid omega-oxidation"/>
    <property type="evidence" value="ECO:0000314"/>
    <property type="project" value="UniProtKB"/>
</dbReference>
<dbReference type="GO" id="GO:1901661">
    <property type="term" value="P:quinone metabolic process"/>
    <property type="evidence" value="ECO:0000314"/>
    <property type="project" value="MGI"/>
</dbReference>
<dbReference type="GO" id="GO:0042572">
    <property type="term" value="P:retinol metabolic process"/>
    <property type="evidence" value="ECO:0000250"/>
    <property type="project" value="UniProtKB"/>
</dbReference>
<dbReference type="CDD" id="cd08299">
    <property type="entry name" value="alcohol_DH_class_I_II_IV"/>
    <property type="match status" value="1"/>
</dbReference>
<dbReference type="FunFam" id="3.90.180.10:FF:000067">
    <property type="entry name" value="alcohol dehydrogenase 1-like isoform X1"/>
    <property type="match status" value="1"/>
</dbReference>
<dbReference type="FunFam" id="3.40.50.720:FF:000003">
    <property type="entry name" value="S-(hydroxymethyl)glutathione dehydrogenase"/>
    <property type="match status" value="1"/>
</dbReference>
<dbReference type="Gene3D" id="3.90.180.10">
    <property type="entry name" value="Medium-chain alcohol dehydrogenases, catalytic domain"/>
    <property type="match status" value="1"/>
</dbReference>
<dbReference type="Gene3D" id="3.40.50.720">
    <property type="entry name" value="NAD(P)-binding Rossmann-like Domain"/>
    <property type="match status" value="1"/>
</dbReference>
<dbReference type="InterPro" id="IPR013149">
    <property type="entry name" value="ADH-like_C"/>
</dbReference>
<dbReference type="InterPro" id="IPR013154">
    <property type="entry name" value="ADH-like_N"/>
</dbReference>
<dbReference type="InterPro" id="IPR002328">
    <property type="entry name" value="ADH_Zn_CS"/>
</dbReference>
<dbReference type="InterPro" id="IPR011032">
    <property type="entry name" value="GroES-like_sf"/>
</dbReference>
<dbReference type="InterPro" id="IPR036291">
    <property type="entry name" value="NAD(P)-bd_dom_sf"/>
</dbReference>
<dbReference type="PANTHER" id="PTHR43880">
    <property type="entry name" value="ALCOHOL DEHYDROGENASE"/>
    <property type="match status" value="1"/>
</dbReference>
<dbReference type="PANTHER" id="PTHR43880:SF14">
    <property type="entry name" value="ALL-TRANS-RETINOL DEHYDROGENASE [NAD(+)] ADH4"/>
    <property type="match status" value="1"/>
</dbReference>
<dbReference type="Pfam" id="PF08240">
    <property type="entry name" value="ADH_N"/>
    <property type="match status" value="1"/>
</dbReference>
<dbReference type="Pfam" id="PF00107">
    <property type="entry name" value="ADH_zinc_N"/>
    <property type="match status" value="1"/>
</dbReference>
<dbReference type="SUPFAM" id="SSF50129">
    <property type="entry name" value="GroES-like"/>
    <property type="match status" value="2"/>
</dbReference>
<dbReference type="SUPFAM" id="SSF51735">
    <property type="entry name" value="NAD(P)-binding Rossmann-fold domains"/>
    <property type="match status" value="1"/>
</dbReference>
<dbReference type="PROSITE" id="PS00059">
    <property type="entry name" value="ADH_ZINC"/>
    <property type="match status" value="1"/>
</dbReference>
<gene>
    <name evidence="11" type="primary">Adh4</name>
    <name evidence="7" type="synonym">Adh2</name>
</gene>
<evidence type="ECO:0000250" key="1"/>
<evidence type="ECO:0000250" key="2">
    <source>
        <dbReference type="UniProtKB" id="P08319"/>
    </source>
</evidence>
<evidence type="ECO:0000269" key="3">
    <source>
    </source>
</evidence>
<evidence type="ECO:0000269" key="4">
    <source>
    </source>
</evidence>
<evidence type="ECO:0000269" key="5">
    <source>
    </source>
</evidence>
<evidence type="ECO:0000269" key="6">
    <source>
    </source>
</evidence>
<evidence type="ECO:0000303" key="7">
    <source>
    </source>
</evidence>
<evidence type="ECO:0000303" key="8">
    <source>
    </source>
</evidence>
<evidence type="ECO:0000305" key="9"/>
<evidence type="ECO:0000305" key="10">
    <source>
    </source>
</evidence>
<evidence type="ECO:0000312" key="11">
    <source>
        <dbReference type="MGI" id="MGI:1349472"/>
    </source>
</evidence>
<evidence type="ECO:0007829" key="12">
    <source>
        <dbReference type="PDB" id="1E3E"/>
    </source>
</evidence>
<evidence type="ECO:0007829" key="13">
    <source>
        <dbReference type="PDB" id="1E3I"/>
    </source>
</evidence>
<comment type="function">
    <text evidence="2 5 6">Catalyzes the NAD-dependent oxidation of either all-trans-retinol or 9-cis-retinol (PubMed:17279314). Also oxidizes long chain omega-hydroxy fatty acids, such as 20-HETE, producing both the intermediate aldehyde, 20-oxoarachidonate and the end product, a dicarboxylic acid, (5Z,8Z,11Z,14Z)-eicosatetraenedioate (PubMed:16081420). Also catalyzes the reduction of benzoquinones (By similarity).</text>
</comment>
<comment type="catalytic activity">
    <reaction evidence="6">
        <text>all-trans-retinol + NAD(+) = all-trans-retinal + NADH + H(+)</text>
        <dbReference type="Rhea" id="RHEA:21284"/>
        <dbReference type="ChEBI" id="CHEBI:15378"/>
        <dbReference type="ChEBI" id="CHEBI:17336"/>
        <dbReference type="ChEBI" id="CHEBI:17898"/>
        <dbReference type="ChEBI" id="CHEBI:57540"/>
        <dbReference type="ChEBI" id="CHEBI:57945"/>
        <dbReference type="EC" id="1.1.1.105"/>
    </reaction>
    <physiologicalReaction direction="left-to-right" evidence="10">
        <dbReference type="Rhea" id="RHEA:21285"/>
    </physiologicalReaction>
</comment>
<comment type="catalytic activity">
    <reaction evidence="6">
        <text>9-cis-retinol + NAD(+) = 9-cis-retinal + NADH + H(+)</text>
        <dbReference type="Rhea" id="RHEA:42052"/>
        <dbReference type="ChEBI" id="CHEBI:15378"/>
        <dbReference type="ChEBI" id="CHEBI:57540"/>
        <dbReference type="ChEBI" id="CHEBI:57945"/>
        <dbReference type="ChEBI" id="CHEBI:78272"/>
        <dbReference type="ChEBI" id="CHEBI:78273"/>
    </reaction>
    <physiologicalReaction direction="left-to-right" evidence="10">
        <dbReference type="Rhea" id="RHEA:42053"/>
    </physiologicalReaction>
</comment>
<comment type="catalytic activity">
    <reaction evidence="5">
        <text>20-hydroxy-(5Z,8Z,11Z,14Z)-eicosatetraenoate + NAD(+) = 20-oxo-(5Z,8Z,11Z,14Z)-eicosatetraenoate + NADH + H(+)</text>
        <dbReference type="Rhea" id="RHEA:39799"/>
        <dbReference type="ChEBI" id="CHEBI:15378"/>
        <dbReference type="ChEBI" id="CHEBI:57540"/>
        <dbReference type="ChEBI" id="CHEBI:57945"/>
        <dbReference type="ChEBI" id="CHEBI:76624"/>
        <dbReference type="ChEBI" id="CHEBI:76645"/>
    </reaction>
    <physiologicalReaction direction="left-to-right" evidence="5">
        <dbReference type="Rhea" id="RHEA:39800"/>
    </physiologicalReaction>
</comment>
<comment type="catalytic activity">
    <reaction evidence="5">
        <text>20-oxo-(5Z,8Z,11Z,14Z)-eicosatetraenoate + NAD(+) + H2O = (5Z,8Z,11Z,14Z)-eicosatetraenedioate + NADH + 2 H(+)</text>
        <dbReference type="Rhea" id="RHEA:39803"/>
        <dbReference type="ChEBI" id="CHEBI:15377"/>
        <dbReference type="ChEBI" id="CHEBI:15378"/>
        <dbReference type="ChEBI" id="CHEBI:57540"/>
        <dbReference type="ChEBI" id="CHEBI:57945"/>
        <dbReference type="ChEBI" id="CHEBI:76645"/>
        <dbReference type="ChEBI" id="CHEBI:76647"/>
    </reaction>
    <physiologicalReaction direction="left-to-right" evidence="5">
        <dbReference type="Rhea" id="RHEA:39804"/>
    </physiologicalReaction>
</comment>
<comment type="catalytic activity">
    <reaction evidence="2">
        <text>1,4-benzoquinone + NADH + H(+) = hydroquinone + NAD(+)</text>
        <dbReference type="Rhea" id="RHEA:60660"/>
        <dbReference type="ChEBI" id="CHEBI:15378"/>
        <dbReference type="ChEBI" id="CHEBI:16509"/>
        <dbReference type="ChEBI" id="CHEBI:17594"/>
        <dbReference type="ChEBI" id="CHEBI:57540"/>
        <dbReference type="ChEBI" id="CHEBI:57945"/>
    </reaction>
    <physiologicalReaction direction="left-to-right" evidence="2">
        <dbReference type="Rhea" id="RHEA:60661"/>
    </physiologicalReaction>
</comment>
<comment type="cofactor">
    <cofactor>
        <name>Zn(2+)</name>
        <dbReference type="ChEBI" id="CHEBI:29105"/>
    </cofactor>
    <text>Binds 2 Zn(2+) ions per subunit.</text>
</comment>
<comment type="activity regulation">
    <text evidence="3 5">Oxidation of 20-HETE is inhibited by low concentrations of N-heptylformamide (PubMed:16081420). Oxidation of 20-HETE is a decreased by 55-65% by either all-trans-retinol or all-trans-retinoic acid (PubMed:16081420). Strongly inhibited by omega-hydroxy fatty acids (PubMed:10514444).</text>
</comment>
<comment type="biophysicochemical properties">
    <kinetics>
        <KM evidence="5">35 uM for 20-HETE</KM>
        <KM evidence="3">0.24 mM for 1,4-benzoquinone</KM>
    </kinetics>
</comment>
<comment type="subunit">
    <text evidence="4">Dimer.</text>
</comment>
<comment type="subcellular location">
    <subcellularLocation>
        <location evidence="1">Cytoplasm</location>
    </subcellularLocation>
</comment>
<comment type="tissue specificity">
    <text evidence="3">Liver specific.</text>
</comment>
<comment type="similarity">
    <text evidence="9">Belongs to the zinc-containing alcohol dehydrogenase family. Class-II subfamily.</text>
</comment>
<comment type="caution">
    <text evidence="6">Has a much lower NAD-retinol dehydrogenase activity compared to the human ortholog.</text>
</comment>
<proteinExistence type="evidence at protein level"/>
<protein>
    <recommendedName>
        <fullName evidence="9">All-trans-retinol dehydrogenase [NAD(+)] ADH4</fullName>
        <ecNumber evidence="6">1.1.1.105</ecNumber>
    </recommendedName>
    <alternativeName>
        <fullName>ADH2</fullName>
    </alternativeName>
    <alternativeName>
        <fullName evidence="8">Alcohol dehydrogenase 2</fullName>
    </alternativeName>
    <alternativeName>
        <fullName>Alcohol dehydrogenase 4</fullName>
    </alternativeName>
    <alternativeName>
        <fullName>Alcohol dehydrogenase class II</fullName>
        <shortName>Alcohol dehydrogenase II</shortName>
    </alternativeName>
</protein>
<feature type="chain" id="PRO_0000160682" description="All-trans-retinol dehydrogenase [NAD(+)] ADH4">
    <location>
        <begin position="1"/>
        <end position="377"/>
    </location>
</feature>
<feature type="binding site">
    <location>
        <position position="47"/>
    </location>
    <ligand>
        <name>Zn(2+)</name>
        <dbReference type="ChEBI" id="CHEBI:29105"/>
        <label>1</label>
        <note>catalytic</note>
    </ligand>
</feature>
<feature type="binding site" evidence="4">
    <location>
        <position position="49"/>
    </location>
    <ligand>
        <name>NAD(+)</name>
        <dbReference type="ChEBI" id="CHEBI:57540"/>
    </ligand>
</feature>
<feature type="binding site">
    <location>
        <position position="68"/>
    </location>
    <ligand>
        <name>Zn(2+)</name>
        <dbReference type="ChEBI" id="CHEBI:29105"/>
        <label>1</label>
        <note>catalytic</note>
    </ligand>
</feature>
<feature type="binding site">
    <location>
        <position position="98"/>
    </location>
    <ligand>
        <name>Zn(2+)</name>
        <dbReference type="ChEBI" id="CHEBI:29105"/>
        <label>2</label>
    </ligand>
</feature>
<feature type="binding site">
    <location>
        <position position="101"/>
    </location>
    <ligand>
        <name>Zn(2+)</name>
        <dbReference type="ChEBI" id="CHEBI:29105"/>
        <label>2</label>
    </ligand>
</feature>
<feature type="binding site">
    <location>
        <position position="104"/>
    </location>
    <ligand>
        <name>Zn(2+)</name>
        <dbReference type="ChEBI" id="CHEBI:29105"/>
        <label>2</label>
    </ligand>
</feature>
<feature type="binding site">
    <location>
        <position position="112"/>
    </location>
    <ligand>
        <name>Zn(2+)</name>
        <dbReference type="ChEBI" id="CHEBI:29105"/>
        <label>2</label>
    </ligand>
</feature>
<feature type="binding site">
    <location>
        <position position="179"/>
    </location>
    <ligand>
        <name>Zn(2+)</name>
        <dbReference type="ChEBI" id="CHEBI:29105"/>
        <label>1</label>
        <note>catalytic</note>
    </ligand>
</feature>
<feature type="binding site" evidence="4">
    <location>
        <begin position="204"/>
        <end position="209"/>
    </location>
    <ligand>
        <name>NAD(+)</name>
        <dbReference type="ChEBI" id="CHEBI:57540"/>
    </ligand>
</feature>
<feature type="binding site" evidence="4">
    <location>
        <position position="228"/>
    </location>
    <ligand>
        <name>NAD(+)</name>
        <dbReference type="ChEBI" id="CHEBI:57540"/>
    </ligand>
</feature>
<feature type="binding site" evidence="4">
    <location>
        <position position="233"/>
    </location>
    <ligand>
        <name>NAD(+)</name>
        <dbReference type="ChEBI" id="CHEBI:57540"/>
    </ligand>
</feature>
<feature type="binding site" evidence="4">
    <location>
        <begin position="297"/>
        <end position="299"/>
    </location>
    <ligand>
        <name>NAD(+)</name>
        <dbReference type="ChEBI" id="CHEBI:57540"/>
    </ligand>
</feature>
<feature type="binding site" evidence="4">
    <location>
        <begin position="320"/>
        <end position="322"/>
    </location>
    <ligand>
        <name>NAD(+)</name>
        <dbReference type="ChEBI" id="CHEBI:57540"/>
    </ligand>
</feature>
<feature type="binding site" evidence="4">
    <location>
        <position position="372"/>
    </location>
    <ligand>
        <name>NAD(+)</name>
        <dbReference type="ChEBI" id="CHEBI:57540"/>
    </ligand>
</feature>
<feature type="mutagenesis site" description="Strongly increases NAD-retinol dehydrogenase activity." evidence="3 6">
    <original>P</original>
    <variation>H</variation>
    <location>
        <position position="48"/>
    </location>
</feature>
<feature type="mutagenesis site" description="No effect." evidence="3">
    <original>N</original>
    <variation>H</variation>
    <location>
        <position position="52"/>
    </location>
</feature>
<feature type="mutagenesis site" description="Strongly increases activity towards ethanol, increases KM for benzoquinone 10-fold." evidence="3">
    <original>S</original>
    <variation>T</variation>
    <location>
        <position position="183"/>
    </location>
</feature>
<feature type="sequence conflict" description="In Ref. 1; CAB57455." evidence="9" ref="1">
    <original>S</original>
    <variation>G</variation>
    <location>
        <position position="197"/>
    </location>
</feature>
<feature type="sequence conflict" description="In Ref. 1; CAB57455." evidence="9" ref="1">
    <original>K</original>
    <variation>E</variation>
    <location>
        <position position="303"/>
    </location>
</feature>
<feature type="strand" evidence="13">
    <location>
        <begin position="8"/>
        <end position="15"/>
    </location>
</feature>
<feature type="strand" evidence="13">
    <location>
        <begin position="23"/>
        <end position="29"/>
    </location>
</feature>
<feature type="strand" evidence="13">
    <location>
        <begin position="36"/>
        <end position="45"/>
    </location>
</feature>
<feature type="helix" evidence="13">
    <location>
        <begin position="48"/>
        <end position="52"/>
    </location>
</feature>
<feature type="strand" evidence="13">
    <location>
        <begin position="62"/>
        <end position="64"/>
    </location>
</feature>
<feature type="strand" evidence="13">
    <location>
        <begin position="69"/>
        <end position="77"/>
    </location>
</feature>
<feature type="strand" evidence="13">
    <location>
        <begin position="89"/>
        <end position="92"/>
    </location>
</feature>
<feature type="strand" evidence="13">
    <location>
        <begin position="99"/>
        <end position="101"/>
    </location>
</feature>
<feature type="helix" evidence="13">
    <location>
        <begin position="102"/>
        <end position="105"/>
    </location>
</feature>
<feature type="helix" evidence="13">
    <location>
        <begin position="121"/>
        <end position="123"/>
    </location>
</feature>
<feature type="strand" evidence="13">
    <location>
        <begin position="134"/>
        <end position="137"/>
    </location>
</feature>
<feature type="strand" evidence="13">
    <location>
        <begin position="140"/>
        <end position="143"/>
    </location>
</feature>
<feature type="turn" evidence="13">
    <location>
        <begin position="146"/>
        <end position="148"/>
    </location>
</feature>
<feature type="strand" evidence="13">
    <location>
        <begin position="151"/>
        <end position="158"/>
    </location>
</feature>
<feature type="helix" evidence="13">
    <location>
        <begin position="159"/>
        <end position="161"/>
    </location>
</feature>
<feature type="strand" evidence="13">
    <location>
        <begin position="162"/>
        <end position="164"/>
    </location>
</feature>
<feature type="helix" evidence="13">
    <location>
        <begin position="171"/>
        <end position="174"/>
    </location>
</feature>
<feature type="helix" evidence="13">
    <location>
        <begin position="175"/>
        <end position="178"/>
    </location>
</feature>
<feature type="helix" evidence="13">
    <location>
        <begin position="180"/>
        <end position="189"/>
    </location>
</feature>
<feature type="turn" evidence="12">
    <location>
        <begin position="190"/>
        <end position="192"/>
    </location>
</feature>
<feature type="strand" evidence="13">
    <location>
        <begin position="199"/>
        <end position="203"/>
    </location>
</feature>
<feature type="helix" evidence="13">
    <location>
        <begin position="207"/>
        <end position="218"/>
    </location>
</feature>
<feature type="strand" evidence="13">
    <location>
        <begin position="222"/>
        <end position="227"/>
    </location>
</feature>
<feature type="helix" evidence="13">
    <location>
        <begin position="231"/>
        <end position="233"/>
    </location>
</feature>
<feature type="helix" evidence="13">
    <location>
        <begin position="234"/>
        <end position="239"/>
    </location>
</feature>
<feature type="strand" evidence="13">
    <location>
        <begin position="243"/>
        <end position="246"/>
    </location>
</feature>
<feature type="helix" evidence="13">
    <location>
        <begin position="248"/>
        <end position="250"/>
    </location>
</feature>
<feature type="helix" evidence="13">
    <location>
        <begin position="255"/>
        <end position="262"/>
    </location>
</feature>
<feature type="strand" evidence="13">
    <location>
        <begin position="267"/>
        <end position="274"/>
    </location>
</feature>
<feature type="helix" evidence="13">
    <location>
        <begin position="277"/>
        <end position="285"/>
    </location>
</feature>
<feature type="turn" evidence="13">
    <location>
        <begin position="289"/>
        <end position="291"/>
    </location>
</feature>
<feature type="strand" evidence="13">
    <location>
        <begin position="293"/>
        <end position="296"/>
    </location>
</feature>
<feature type="strand" evidence="13">
    <location>
        <begin position="300"/>
        <end position="307"/>
    </location>
</feature>
<feature type="helix" evidence="13">
    <location>
        <begin position="308"/>
        <end position="312"/>
    </location>
</feature>
<feature type="strand" evidence="13">
    <location>
        <begin position="316"/>
        <end position="319"/>
    </location>
</feature>
<feature type="helix" evidence="13">
    <location>
        <begin position="322"/>
        <end position="324"/>
    </location>
</feature>
<feature type="helix" evidence="13">
    <location>
        <begin position="327"/>
        <end position="339"/>
    </location>
</feature>
<feature type="helix" evidence="13">
    <location>
        <begin position="345"/>
        <end position="348"/>
    </location>
</feature>
<feature type="strand" evidence="13">
    <location>
        <begin position="349"/>
        <end position="354"/>
    </location>
</feature>
<feature type="helix" evidence="13">
    <location>
        <begin position="355"/>
        <end position="357"/>
    </location>
</feature>
<feature type="helix" evidence="13">
    <location>
        <begin position="358"/>
        <end position="366"/>
    </location>
</feature>
<feature type="strand" evidence="13">
    <location>
        <begin position="371"/>
        <end position="376"/>
    </location>
</feature>
<name>ADH4_MOUSE</name>
<keyword id="KW-0002">3D-structure</keyword>
<keyword id="KW-0963">Cytoplasm</keyword>
<keyword id="KW-0443">Lipid metabolism</keyword>
<keyword id="KW-0479">Metal-binding</keyword>
<keyword id="KW-0520">NAD</keyword>
<keyword id="KW-0560">Oxidoreductase</keyword>
<keyword id="KW-1185">Reference proteome</keyword>
<keyword id="KW-0862">Zinc</keyword>
<reference key="1">
    <citation type="journal article" date="1999" name="J. Biol. Chem.">
        <title>A novel subtype of class II alcohol dehydrogenase in rodents. Unique Pro(47) and Ser(182) modulates hydride transfer in the mouse enzyme.</title>
        <authorList>
            <person name="Svensson S."/>
            <person name="Stroemberg P."/>
            <person name="Hoeoeg J.-O."/>
        </authorList>
    </citation>
    <scope>NUCLEOTIDE SEQUENCE [MRNA]</scope>
    <scope>ZINC-BINDING</scope>
    <scope>MUTAGENESIS OF PRO-48; ASN-52 AND SER-183</scope>
    <scope>TISSUE SPECIFICITY</scope>
    <scope>BIOPHYSICOCHEMICAL PROPERTIES</scope>
    <scope>ACTIVITY REGULATION</scope>
    <source>
        <tissue>Liver</tissue>
    </source>
</reference>
<reference key="2">
    <citation type="journal article" date="2005" name="Science">
        <title>The transcriptional landscape of the mammalian genome.</title>
        <authorList>
            <person name="Carninci P."/>
            <person name="Kasukawa T."/>
            <person name="Katayama S."/>
            <person name="Gough J."/>
            <person name="Frith M.C."/>
            <person name="Maeda N."/>
            <person name="Oyama R."/>
            <person name="Ravasi T."/>
            <person name="Lenhard B."/>
            <person name="Wells C."/>
            <person name="Kodzius R."/>
            <person name="Shimokawa K."/>
            <person name="Bajic V.B."/>
            <person name="Brenner S.E."/>
            <person name="Batalov S."/>
            <person name="Forrest A.R."/>
            <person name="Zavolan M."/>
            <person name="Davis M.J."/>
            <person name="Wilming L.G."/>
            <person name="Aidinis V."/>
            <person name="Allen J.E."/>
            <person name="Ambesi-Impiombato A."/>
            <person name="Apweiler R."/>
            <person name="Aturaliya R.N."/>
            <person name="Bailey T.L."/>
            <person name="Bansal M."/>
            <person name="Baxter L."/>
            <person name="Beisel K.W."/>
            <person name="Bersano T."/>
            <person name="Bono H."/>
            <person name="Chalk A.M."/>
            <person name="Chiu K.P."/>
            <person name="Choudhary V."/>
            <person name="Christoffels A."/>
            <person name="Clutterbuck D.R."/>
            <person name="Crowe M.L."/>
            <person name="Dalla E."/>
            <person name="Dalrymple B.P."/>
            <person name="de Bono B."/>
            <person name="Della Gatta G."/>
            <person name="di Bernardo D."/>
            <person name="Down T."/>
            <person name="Engstrom P."/>
            <person name="Fagiolini M."/>
            <person name="Faulkner G."/>
            <person name="Fletcher C.F."/>
            <person name="Fukushima T."/>
            <person name="Furuno M."/>
            <person name="Futaki S."/>
            <person name="Gariboldi M."/>
            <person name="Georgii-Hemming P."/>
            <person name="Gingeras T.R."/>
            <person name="Gojobori T."/>
            <person name="Green R.E."/>
            <person name="Gustincich S."/>
            <person name="Harbers M."/>
            <person name="Hayashi Y."/>
            <person name="Hensch T.K."/>
            <person name="Hirokawa N."/>
            <person name="Hill D."/>
            <person name="Huminiecki L."/>
            <person name="Iacono M."/>
            <person name="Ikeo K."/>
            <person name="Iwama A."/>
            <person name="Ishikawa T."/>
            <person name="Jakt M."/>
            <person name="Kanapin A."/>
            <person name="Katoh M."/>
            <person name="Kawasawa Y."/>
            <person name="Kelso J."/>
            <person name="Kitamura H."/>
            <person name="Kitano H."/>
            <person name="Kollias G."/>
            <person name="Krishnan S.P."/>
            <person name="Kruger A."/>
            <person name="Kummerfeld S.K."/>
            <person name="Kurochkin I.V."/>
            <person name="Lareau L.F."/>
            <person name="Lazarevic D."/>
            <person name="Lipovich L."/>
            <person name="Liu J."/>
            <person name="Liuni S."/>
            <person name="McWilliam S."/>
            <person name="Madan Babu M."/>
            <person name="Madera M."/>
            <person name="Marchionni L."/>
            <person name="Matsuda H."/>
            <person name="Matsuzawa S."/>
            <person name="Miki H."/>
            <person name="Mignone F."/>
            <person name="Miyake S."/>
            <person name="Morris K."/>
            <person name="Mottagui-Tabar S."/>
            <person name="Mulder N."/>
            <person name="Nakano N."/>
            <person name="Nakauchi H."/>
            <person name="Ng P."/>
            <person name="Nilsson R."/>
            <person name="Nishiguchi S."/>
            <person name="Nishikawa S."/>
            <person name="Nori F."/>
            <person name="Ohara O."/>
            <person name="Okazaki Y."/>
            <person name="Orlando V."/>
            <person name="Pang K.C."/>
            <person name="Pavan W.J."/>
            <person name="Pavesi G."/>
            <person name="Pesole G."/>
            <person name="Petrovsky N."/>
            <person name="Piazza S."/>
            <person name="Reed J."/>
            <person name="Reid J.F."/>
            <person name="Ring B.Z."/>
            <person name="Ringwald M."/>
            <person name="Rost B."/>
            <person name="Ruan Y."/>
            <person name="Salzberg S.L."/>
            <person name="Sandelin A."/>
            <person name="Schneider C."/>
            <person name="Schoenbach C."/>
            <person name="Sekiguchi K."/>
            <person name="Semple C.A."/>
            <person name="Seno S."/>
            <person name="Sessa L."/>
            <person name="Sheng Y."/>
            <person name="Shibata Y."/>
            <person name="Shimada H."/>
            <person name="Shimada K."/>
            <person name="Silva D."/>
            <person name="Sinclair B."/>
            <person name="Sperling S."/>
            <person name="Stupka E."/>
            <person name="Sugiura K."/>
            <person name="Sultana R."/>
            <person name="Takenaka Y."/>
            <person name="Taki K."/>
            <person name="Tammoja K."/>
            <person name="Tan S.L."/>
            <person name="Tang S."/>
            <person name="Taylor M.S."/>
            <person name="Tegner J."/>
            <person name="Teichmann S.A."/>
            <person name="Ueda H.R."/>
            <person name="van Nimwegen E."/>
            <person name="Verardo R."/>
            <person name="Wei C.L."/>
            <person name="Yagi K."/>
            <person name="Yamanishi H."/>
            <person name="Zabarovsky E."/>
            <person name="Zhu S."/>
            <person name="Zimmer A."/>
            <person name="Hide W."/>
            <person name="Bult C."/>
            <person name="Grimmond S.M."/>
            <person name="Teasdale R.D."/>
            <person name="Liu E.T."/>
            <person name="Brusic V."/>
            <person name="Quackenbush J."/>
            <person name="Wahlestedt C."/>
            <person name="Mattick J.S."/>
            <person name="Hume D.A."/>
            <person name="Kai C."/>
            <person name="Sasaki D."/>
            <person name="Tomaru Y."/>
            <person name="Fukuda S."/>
            <person name="Kanamori-Katayama M."/>
            <person name="Suzuki M."/>
            <person name="Aoki J."/>
            <person name="Arakawa T."/>
            <person name="Iida J."/>
            <person name="Imamura K."/>
            <person name="Itoh M."/>
            <person name="Kato T."/>
            <person name="Kawaji H."/>
            <person name="Kawagashira N."/>
            <person name="Kawashima T."/>
            <person name="Kojima M."/>
            <person name="Kondo S."/>
            <person name="Konno H."/>
            <person name="Nakano K."/>
            <person name="Ninomiya N."/>
            <person name="Nishio T."/>
            <person name="Okada M."/>
            <person name="Plessy C."/>
            <person name="Shibata K."/>
            <person name="Shiraki T."/>
            <person name="Suzuki S."/>
            <person name="Tagami M."/>
            <person name="Waki K."/>
            <person name="Watahiki A."/>
            <person name="Okamura-Oho Y."/>
            <person name="Suzuki H."/>
            <person name="Kawai J."/>
            <person name="Hayashizaki Y."/>
        </authorList>
    </citation>
    <scope>NUCLEOTIDE SEQUENCE [LARGE SCALE MRNA]</scope>
    <source>
        <strain>C57BL/6J</strain>
        <tissue>Testis</tissue>
    </source>
</reference>
<reference key="3">
    <citation type="journal article" date="2005" name="J. Biol. Chem.">
        <title>Omega-oxidation of 20-hydroxyeicosatetraenoic acid (20-HETE) in cerebral microvascular smooth muscle and endothelium by alcohol dehydrogenase 4.</title>
        <authorList>
            <person name="Collins X.H."/>
            <person name="Harmon S.D."/>
            <person name="Kaduce T.L."/>
            <person name="Berst K.B."/>
            <person name="Fang X."/>
            <person name="Moore S.A."/>
            <person name="Raju T.V."/>
            <person name="Falck J.R."/>
            <person name="Weintraub N.L."/>
            <person name="Duester G."/>
            <person name="Plapp B.V."/>
            <person name="Spector A.A."/>
        </authorList>
    </citation>
    <scope>CATALYTIC ACTIVITY</scope>
    <scope>FUNCTION</scope>
    <scope>BIOPHYSICOCHEMICAL PROPERTIES</scope>
    <scope>ACTIVITY REGULATION</scope>
</reference>
<reference key="4">
    <citation type="journal article" date="2007" name="Cell. Mol. Life Sci.">
        <title>Alcohol dehydrogenase 2 is a major hepatic enzyme for human retinol metabolism.</title>
        <authorList>
            <person name="Hellgren M."/>
            <person name="Stroemberg P."/>
            <person name="Gallego O."/>
            <person name="Martras S."/>
            <person name="Farres J."/>
            <person name="Persson B."/>
            <person name="Pares X."/>
            <person name="Hoeoeg J.O."/>
        </authorList>
    </citation>
    <scope>FUNCTION</scope>
    <scope>CATALYTIC ACTIVITY</scope>
    <scope>CAUTION</scope>
    <scope>MUTAGENESIS OF PRO-48</scope>
</reference>
<reference key="5">
    <citation type="journal article" date="2010" name="Cell">
        <title>A tissue-specific atlas of mouse protein phosphorylation and expression.</title>
        <authorList>
            <person name="Huttlin E.L."/>
            <person name="Jedrychowski M.P."/>
            <person name="Elias J.E."/>
            <person name="Goswami T."/>
            <person name="Rad R."/>
            <person name="Beausoleil S.A."/>
            <person name="Villen J."/>
            <person name="Haas W."/>
            <person name="Sowa M.E."/>
            <person name="Gygi S.P."/>
        </authorList>
    </citation>
    <scope>IDENTIFICATION BY MASS SPECTROMETRY [LARGE SCALE ANALYSIS]</scope>
    <source>
        <tissue>Liver</tissue>
    </source>
</reference>
<reference key="6">
    <citation type="journal article" date="2000" name="J. Mol. Biol.">
        <title>Crystal structures of mouse class II alcohol dehydrogenase reveal determinants of substrate specificity and catalytic efficiency.</title>
        <authorList>
            <person name="Svensson S."/>
            <person name="Hoeoeg J.-O."/>
            <person name="Schneider G."/>
            <person name="Sandalova T."/>
        </authorList>
    </citation>
    <scope>X-RAY CRYSTALLOGRAPHY (2.1 ANGSTROMS) OF WILD-TYPE IN COMPLEX WITH NADH AND INHIBITOR AND OF MUTANT HIS-48 IN COMPLEX WITH NADH</scope>
</reference>
<organism>
    <name type="scientific">Mus musculus</name>
    <name type="common">Mouse</name>
    <dbReference type="NCBI Taxonomy" id="10090"/>
    <lineage>
        <taxon>Eukaryota</taxon>
        <taxon>Metazoa</taxon>
        <taxon>Chordata</taxon>
        <taxon>Craniata</taxon>
        <taxon>Vertebrata</taxon>
        <taxon>Euteleostomi</taxon>
        <taxon>Mammalia</taxon>
        <taxon>Eutheria</taxon>
        <taxon>Euarchontoglires</taxon>
        <taxon>Glires</taxon>
        <taxon>Rodentia</taxon>
        <taxon>Myomorpha</taxon>
        <taxon>Muroidea</taxon>
        <taxon>Muridae</taxon>
        <taxon>Murinae</taxon>
        <taxon>Mus</taxon>
        <taxon>Mus</taxon>
    </lineage>
</organism>